<evidence type="ECO:0000255" key="1">
    <source>
        <dbReference type="PROSITE-ProRule" id="PRU00080"/>
    </source>
</evidence>
<sequence>MDLLSSLPDEVRCLILSFLTTKESASTSVLSKKWRNLFALVPNLDFDDSEFLHPEEGKRERDGILQSFMDFVDRVLSLQGNSSIRKFSLKCETGVPPARVNRWLCEVLQRDVSDIDLTIDLGYGYYLPEELFVSETLVNLKLKSAFNIDWWPGAEGTSLPMLKSLCVYGVRVFCDDELQELLPCFPVLEELQMSNMQWLDSDETVSSATLTTLHITGIRSENPKSISFDTPNLLSFVYTDFVAEDYPLVNMKNLSLARLALRANDDQIKRVRGPSNDLLEYDVVRHFGNVVKLMNGIQNVQELHLCPDTLELLSVCCESMPVFNNVKKLLIYSDEDRGWQAVPVLLRNCPRLETLIFEGIVHHVTDKCGDACDCIFRKDKGRSLKSCPVKVVEINGFGVTMKEKYLIEHFLDYFSCLKEMKIYINCEEDGVTQQVMKNREVSKLVLDEMEEYNEFYSCNVKLFLCKKKSIPQ</sequence>
<accession>Q9LDJ9</accession>
<keyword id="KW-1185">Reference proteome</keyword>
<protein>
    <recommendedName>
        <fullName>F-box protein At3g03040</fullName>
    </recommendedName>
</protein>
<dbReference type="EMBL" id="AC012328">
    <property type="protein sequence ID" value="AAF26120.1"/>
    <property type="molecule type" value="Genomic_DNA"/>
</dbReference>
<dbReference type="EMBL" id="AC018363">
    <property type="protein sequence ID" value="AAF26956.1"/>
    <property type="molecule type" value="Genomic_DNA"/>
</dbReference>
<dbReference type="EMBL" id="CP002686">
    <property type="protein sequence ID" value="AEE73895.1"/>
    <property type="molecule type" value="Genomic_DNA"/>
</dbReference>
<dbReference type="RefSeq" id="NP_186954.1">
    <property type="nucleotide sequence ID" value="NM_111174.3"/>
</dbReference>
<dbReference type="FunCoup" id="Q9LDJ9">
    <property type="interactions" value="1516"/>
</dbReference>
<dbReference type="STRING" id="3702.Q9LDJ9"/>
<dbReference type="PaxDb" id="3702-AT3G03040.1"/>
<dbReference type="ProteomicsDB" id="222453"/>
<dbReference type="EnsemblPlants" id="AT3G03040.1">
    <property type="protein sequence ID" value="AT3G03040.1"/>
    <property type="gene ID" value="AT3G03040"/>
</dbReference>
<dbReference type="GeneID" id="821150"/>
<dbReference type="Gramene" id="AT3G03040.1">
    <property type="protein sequence ID" value="AT3G03040.1"/>
    <property type="gene ID" value="AT3G03040"/>
</dbReference>
<dbReference type="KEGG" id="ath:AT3G03040"/>
<dbReference type="Araport" id="AT3G03040"/>
<dbReference type="TAIR" id="AT3G03040"/>
<dbReference type="HOGENOM" id="CLU_010721_7_1_1"/>
<dbReference type="InParanoid" id="Q9LDJ9"/>
<dbReference type="OMA" id="CEVELLM"/>
<dbReference type="PhylomeDB" id="Q9LDJ9"/>
<dbReference type="PRO" id="PR:Q9LDJ9"/>
<dbReference type="Proteomes" id="UP000006548">
    <property type="component" value="Chromosome 3"/>
</dbReference>
<dbReference type="ExpressionAtlas" id="Q9LDJ9">
    <property type="expression patterns" value="baseline and differential"/>
</dbReference>
<dbReference type="GO" id="GO:0006952">
    <property type="term" value="P:defense response"/>
    <property type="evidence" value="ECO:0000315"/>
    <property type="project" value="TAIR"/>
</dbReference>
<dbReference type="CDD" id="cd22160">
    <property type="entry name" value="F-box_AtFBL13-like"/>
    <property type="match status" value="1"/>
</dbReference>
<dbReference type="Gene3D" id="1.20.1280.50">
    <property type="match status" value="1"/>
</dbReference>
<dbReference type="Gene3D" id="3.80.10.10">
    <property type="entry name" value="Ribonuclease Inhibitor"/>
    <property type="match status" value="1"/>
</dbReference>
<dbReference type="InterPro" id="IPR036047">
    <property type="entry name" value="F-box-like_dom_sf"/>
</dbReference>
<dbReference type="InterPro" id="IPR053781">
    <property type="entry name" value="F-box_AtFBL13-like"/>
</dbReference>
<dbReference type="InterPro" id="IPR001810">
    <property type="entry name" value="F-box_dom"/>
</dbReference>
<dbReference type="InterPro" id="IPR006566">
    <property type="entry name" value="FBD"/>
</dbReference>
<dbReference type="InterPro" id="IPR055294">
    <property type="entry name" value="FBL60-like"/>
</dbReference>
<dbReference type="InterPro" id="IPR032675">
    <property type="entry name" value="LRR_dom_sf"/>
</dbReference>
<dbReference type="InterPro" id="IPR055411">
    <property type="entry name" value="LRR_FXL15/At3g58940/PEG3-like"/>
</dbReference>
<dbReference type="PANTHER" id="PTHR31293:SF24">
    <property type="entry name" value="BNAANNG15180D PROTEIN"/>
    <property type="match status" value="1"/>
</dbReference>
<dbReference type="PANTHER" id="PTHR31293">
    <property type="entry name" value="RNI-LIKE SUPERFAMILY PROTEIN"/>
    <property type="match status" value="1"/>
</dbReference>
<dbReference type="Pfam" id="PF00646">
    <property type="entry name" value="F-box"/>
    <property type="match status" value="1"/>
</dbReference>
<dbReference type="Pfam" id="PF24758">
    <property type="entry name" value="LRR_At5g56370"/>
    <property type="match status" value="1"/>
</dbReference>
<dbReference type="SMART" id="SM00579">
    <property type="entry name" value="FBD"/>
    <property type="match status" value="1"/>
</dbReference>
<dbReference type="SUPFAM" id="SSF81383">
    <property type="entry name" value="F-box domain"/>
    <property type="match status" value="1"/>
</dbReference>
<dbReference type="SUPFAM" id="SSF52047">
    <property type="entry name" value="RNI-like"/>
    <property type="match status" value="1"/>
</dbReference>
<dbReference type="PROSITE" id="PS50181">
    <property type="entry name" value="FBOX"/>
    <property type="match status" value="1"/>
</dbReference>
<name>FB133_ARATH</name>
<gene>
    <name type="ordered locus">At3g03040</name>
    <name type="ORF">F13E7.1</name>
    <name type="ORF">T17B22.27</name>
</gene>
<reference key="1">
    <citation type="journal article" date="2000" name="Nature">
        <title>Sequence and analysis of chromosome 3 of the plant Arabidopsis thaliana.</title>
        <authorList>
            <person name="Salanoubat M."/>
            <person name="Lemcke K."/>
            <person name="Rieger M."/>
            <person name="Ansorge W."/>
            <person name="Unseld M."/>
            <person name="Fartmann B."/>
            <person name="Valle G."/>
            <person name="Bloecker H."/>
            <person name="Perez-Alonso M."/>
            <person name="Obermaier B."/>
            <person name="Delseny M."/>
            <person name="Boutry M."/>
            <person name="Grivell L.A."/>
            <person name="Mache R."/>
            <person name="Puigdomenech P."/>
            <person name="De Simone V."/>
            <person name="Choisne N."/>
            <person name="Artiguenave F."/>
            <person name="Robert C."/>
            <person name="Brottier P."/>
            <person name="Wincker P."/>
            <person name="Cattolico L."/>
            <person name="Weissenbach J."/>
            <person name="Saurin W."/>
            <person name="Quetier F."/>
            <person name="Schaefer M."/>
            <person name="Mueller-Auer S."/>
            <person name="Gabel C."/>
            <person name="Fuchs M."/>
            <person name="Benes V."/>
            <person name="Wurmbach E."/>
            <person name="Drzonek H."/>
            <person name="Erfle H."/>
            <person name="Jordan N."/>
            <person name="Bangert S."/>
            <person name="Wiedelmann R."/>
            <person name="Kranz H."/>
            <person name="Voss H."/>
            <person name="Holland R."/>
            <person name="Brandt P."/>
            <person name="Nyakatura G."/>
            <person name="Vezzi A."/>
            <person name="D'Angelo M."/>
            <person name="Pallavicini A."/>
            <person name="Toppo S."/>
            <person name="Simionati B."/>
            <person name="Conrad A."/>
            <person name="Hornischer K."/>
            <person name="Kauer G."/>
            <person name="Loehnert T.-H."/>
            <person name="Nordsiek G."/>
            <person name="Reichelt J."/>
            <person name="Scharfe M."/>
            <person name="Schoen O."/>
            <person name="Bargues M."/>
            <person name="Terol J."/>
            <person name="Climent J."/>
            <person name="Navarro P."/>
            <person name="Collado C."/>
            <person name="Perez-Perez A."/>
            <person name="Ottenwaelder B."/>
            <person name="Duchemin D."/>
            <person name="Cooke R."/>
            <person name="Laudie M."/>
            <person name="Berger-Llauro C."/>
            <person name="Purnelle B."/>
            <person name="Masuy D."/>
            <person name="de Haan M."/>
            <person name="Maarse A.C."/>
            <person name="Alcaraz J.-P."/>
            <person name="Cottet A."/>
            <person name="Casacuberta E."/>
            <person name="Monfort A."/>
            <person name="Argiriou A."/>
            <person name="Flores M."/>
            <person name="Liguori R."/>
            <person name="Vitale D."/>
            <person name="Mannhaupt G."/>
            <person name="Haase D."/>
            <person name="Schoof H."/>
            <person name="Rudd S."/>
            <person name="Zaccaria P."/>
            <person name="Mewes H.-W."/>
            <person name="Mayer K.F.X."/>
            <person name="Kaul S."/>
            <person name="Town C.D."/>
            <person name="Koo H.L."/>
            <person name="Tallon L.J."/>
            <person name="Jenkins J."/>
            <person name="Rooney T."/>
            <person name="Rizzo M."/>
            <person name="Walts A."/>
            <person name="Utterback T."/>
            <person name="Fujii C.Y."/>
            <person name="Shea T.P."/>
            <person name="Creasy T.H."/>
            <person name="Haas B."/>
            <person name="Maiti R."/>
            <person name="Wu D."/>
            <person name="Peterson J."/>
            <person name="Van Aken S."/>
            <person name="Pai G."/>
            <person name="Militscher J."/>
            <person name="Sellers P."/>
            <person name="Gill J.E."/>
            <person name="Feldblyum T.V."/>
            <person name="Preuss D."/>
            <person name="Lin X."/>
            <person name="Nierman W.C."/>
            <person name="Salzberg S.L."/>
            <person name="White O."/>
            <person name="Venter J.C."/>
            <person name="Fraser C.M."/>
            <person name="Kaneko T."/>
            <person name="Nakamura Y."/>
            <person name="Sato S."/>
            <person name="Kato T."/>
            <person name="Asamizu E."/>
            <person name="Sasamoto S."/>
            <person name="Kimura T."/>
            <person name="Idesawa K."/>
            <person name="Kawashima K."/>
            <person name="Kishida Y."/>
            <person name="Kiyokawa C."/>
            <person name="Kohara M."/>
            <person name="Matsumoto M."/>
            <person name="Matsuno A."/>
            <person name="Muraki A."/>
            <person name="Nakayama S."/>
            <person name="Nakazaki N."/>
            <person name="Shinpo S."/>
            <person name="Takeuchi C."/>
            <person name="Wada T."/>
            <person name="Watanabe A."/>
            <person name="Yamada M."/>
            <person name="Yasuda M."/>
            <person name="Tabata S."/>
        </authorList>
    </citation>
    <scope>NUCLEOTIDE SEQUENCE [LARGE SCALE GENOMIC DNA]</scope>
    <source>
        <strain>cv. Columbia</strain>
    </source>
</reference>
<reference key="2">
    <citation type="journal article" date="2017" name="Plant J.">
        <title>Araport11: a complete reannotation of the Arabidopsis thaliana reference genome.</title>
        <authorList>
            <person name="Cheng C.Y."/>
            <person name="Krishnakumar V."/>
            <person name="Chan A.P."/>
            <person name="Thibaud-Nissen F."/>
            <person name="Schobel S."/>
            <person name="Town C.D."/>
        </authorList>
    </citation>
    <scope>GENOME REANNOTATION</scope>
    <source>
        <strain>cv. Columbia</strain>
    </source>
</reference>
<feature type="chain" id="PRO_0000283404" description="F-box protein At3g03040">
    <location>
        <begin position="1"/>
        <end position="472"/>
    </location>
</feature>
<feature type="domain" description="F-box" evidence="1">
    <location>
        <begin position="1"/>
        <end position="49"/>
    </location>
</feature>
<organism>
    <name type="scientific">Arabidopsis thaliana</name>
    <name type="common">Mouse-ear cress</name>
    <dbReference type="NCBI Taxonomy" id="3702"/>
    <lineage>
        <taxon>Eukaryota</taxon>
        <taxon>Viridiplantae</taxon>
        <taxon>Streptophyta</taxon>
        <taxon>Embryophyta</taxon>
        <taxon>Tracheophyta</taxon>
        <taxon>Spermatophyta</taxon>
        <taxon>Magnoliopsida</taxon>
        <taxon>eudicotyledons</taxon>
        <taxon>Gunneridae</taxon>
        <taxon>Pentapetalae</taxon>
        <taxon>rosids</taxon>
        <taxon>malvids</taxon>
        <taxon>Brassicales</taxon>
        <taxon>Brassicaceae</taxon>
        <taxon>Camelineae</taxon>
        <taxon>Arabidopsis</taxon>
    </lineage>
</organism>
<proteinExistence type="evidence at transcript level"/>